<gene>
    <name evidence="1" type="primary">hisZ</name>
    <name type="ordered locus">BH3584</name>
</gene>
<comment type="function">
    <text evidence="1">Required for the first step of histidine biosynthesis. May allow the feedback regulation of ATP phosphoribosyltransferase activity by histidine.</text>
</comment>
<comment type="pathway">
    <text evidence="1">Amino-acid biosynthesis; L-histidine biosynthesis; L-histidine from 5-phospho-alpha-D-ribose 1-diphosphate: step 1/9.</text>
</comment>
<comment type="subunit">
    <text evidence="1">Heteromultimer composed of HisG and HisZ subunits.</text>
</comment>
<comment type="subcellular location">
    <subcellularLocation>
        <location evidence="1">Cytoplasm</location>
    </subcellularLocation>
</comment>
<comment type="miscellaneous">
    <text>This function is generally fulfilled by the C-terminal part of HisG, which is missing in some bacteria such as this one.</text>
</comment>
<comment type="similarity">
    <text evidence="1">Belongs to the class-II aminoacyl-tRNA synthetase family. HisZ subfamily.</text>
</comment>
<protein>
    <recommendedName>
        <fullName evidence="1">ATP phosphoribosyltransferase regulatory subunit</fullName>
    </recommendedName>
</protein>
<dbReference type="EMBL" id="BA000004">
    <property type="protein sequence ID" value="BAB07303.1"/>
    <property type="molecule type" value="Genomic_DNA"/>
</dbReference>
<dbReference type="PIR" id="H84097">
    <property type="entry name" value="H84097"/>
</dbReference>
<dbReference type="RefSeq" id="WP_010899712.1">
    <property type="nucleotide sequence ID" value="NC_002570.2"/>
</dbReference>
<dbReference type="PDB" id="3OD1">
    <property type="method" value="X-ray"/>
    <property type="resolution" value="1.97 A"/>
    <property type="chains" value="A/B=1-397"/>
</dbReference>
<dbReference type="PDBsum" id="3OD1"/>
<dbReference type="SMR" id="Q9K6Z0"/>
<dbReference type="STRING" id="272558.gene:10729497"/>
<dbReference type="DNASU" id="893798"/>
<dbReference type="GeneID" id="87599113"/>
<dbReference type="KEGG" id="bha:BH3584"/>
<dbReference type="eggNOG" id="COG3705">
    <property type="taxonomic scope" value="Bacteria"/>
</dbReference>
<dbReference type="HOGENOM" id="CLU_025113_0_0_9"/>
<dbReference type="OrthoDB" id="9800814at2"/>
<dbReference type="UniPathway" id="UPA00031">
    <property type="reaction ID" value="UER00006"/>
</dbReference>
<dbReference type="EvolutionaryTrace" id="Q9K6Z0"/>
<dbReference type="Proteomes" id="UP000001258">
    <property type="component" value="Chromosome"/>
</dbReference>
<dbReference type="GO" id="GO:0005737">
    <property type="term" value="C:cytoplasm"/>
    <property type="evidence" value="ECO:0007669"/>
    <property type="project" value="UniProtKB-SubCell"/>
</dbReference>
<dbReference type="GO" id="GO:0140096">
    <property type="term" value="F:catalytic activity, acting on a protein"/>
    <property type="evidence" value="ECO:0007669"/>
    <property type="project" value="UniProtKB-ARBA"/>
</dbReference>
<dbReference type="GO" id="GO:0004821">
    <property type="term" value="F:histidine-tRNA ligase activity"/>
    <property type="evidence" value="ECO:0007669"/>
    <property type="project" value="InterPro"/>
</dbReference>
<dbReference type="GO" id="GO:0016740">
    <property type="term" value="F:transferase activity"/>
    <property type="evidence" value="ECO:0007669"/>
    <property type="project" value="UniProtKB-ARBA"/>
</dbReference>
<dbReference type="GO" id="GO:0006427">
    <property type="term" value="P:histidyl-tRNA aminoacylation"/>
    <property type="evidence" value="ECO:0007669"/>
    <property type="project" value="InterPro"/>
</dbReference>
<dbReference type="GO" id="GO:0000105">
    <property type="term" value="P:L-histidine biosynthetic process"/>
    <property type="evidence" value="ECO:0007669"/>
    <property type="project" value="UniProtKB-UniRule"/>
</dbReference>
<dbReference type="CDD" id="cd00773">
    <property type="entry name" value="HisRS-like_core"/>
    <property type="match status" value="1"/>
</dbReference>
<dbReference type="Gene3D" id="3.40.50.12590">
    <property type="match status" value="1"/>
</dbReference>
<dbReference type="Gene3D" id="3.30.930.10">
    <property type="entry name" value="Bira Bifunctional Protein, Domain 2"/>
    <property type="match status" value="1"/>
</dbReference>
<dbReference type="HAMAP" id="MF_00125">
    <property type="entry name" value="HisZ"/>
    <property type="match status" value="1"/>
</dbReference>
<dbReference type="InterPro" id="IPR006195">
    <property type="entry name" value="aa-tRNA-synth_II"/>
</dbReference>
<dbReference type="InterPro" id="IPR045864">
    <property type="entry name" value="aa-tRNA-synth_II/BPL/LPL"/>
</dbReference>
<dbReference type="InterPro" id="IPR041715">
    <property type="entry name" value="HisRS-like_core"/>
</dbReference>
<dbReference type="InterPro" id="IPR004516">
    <property type="entry name" value="HisRS/HisZ"/>
</dbReference>
<dbReference type="InterPro" id="IPR004517">
    <property type="entry name" value="HisZ"/>
</dbReference>
<dbReference type="InterPro" id="IPR053846">
    <property type="entry name" value="HisZ-C"/>
</dbReference>
<dbReference type="NCBIfam" id="TIGR00443">
    <property type="entry name" value="hisZ_biosyn_reg"/>
    <property type="match status" value="1"/>
</dbReference>
<dbReference type="NCBIfam" id="NF008941">
    <property type="entry name" value="PRK12292.2-4"/>
    <property type="match status" value="1"/>
</dbReference>
<dbReference type="PANTHER" id="PTHR43707:SF1">
    <property type="entry name" value="HISTIDINE--TRNA LIGASE, MITOCHONDRIAL-RELATED"/>
    <property type="match status" value="1"/>
</dbReference>
<dbReference type="PANTHER" id="PTHR43707">
    <property type="entry name" value="HISTIDYL-TRNA SYNTHETASE"/>
    <property type="match status" value="1"/>
</dbReference>
<dbReference type="Pfam" id="PF21996">
    <property type="entry name" value="HisZ-like"/>
    <property type="match status" value="1"/>
</dbReference>
<dbReference type="Pfam" id="PF13393">
    <property type="entry name" value="tRNA-synt_His"/>
    <property type="match status" value="1"/>
</dbReference>
<dbReference type="PIRSF" id="PIRSF001549">
    <property type="entry name" value="His-tRNA_synth"/>
    <property type="match status" value="1"/>
</dbReference>
<dbReference type="SUPFAM" id="SSF55681">
    <property type="entry name" value="Class II aaRS and biotin synthetases"/>
    <property type="match status" value="1"/>
</dbReference>
<dbReference type="PROSITE" id="PS50862">
    <property type="entry name" value="AA_TRNA_LIGASE_II"/>
    <property type="match status" value="1"/>
</dbReference>
<organism>
    <name type="scientific">Halalkalibacterium halodurans (strain ATCC BAA-125 / DSM 18197 / FERM 7344 / JCM 9153 / C-125)</name>
    <name type="common">Bacillus halodurans</name>
    <dbReference type="NCBI Taxonomy" id="272558"/>
    <lineage>
        <taxon>Bacteria</taxon>
        <taxon>Bacillati</taxon>
        <taxon>Bacillota</taxon>
        <taxon>Bacilli</taxon>
        <taxon>Bacillales</taxon>
        <taxon>Bacillaceae</taxon>
        <taxon>Halalkalibacterium (ex Joshi et al. 2022)</taxon>
    </lineage>
</organism>
<keyword id="KW-0002">3D-structure</keyword>
<keyword id="KW-0028">Amino-acid biosynthesis</keyword>
<keyword id="KW-0963">Cytoplasm</keyword>
<keyword id="KW-0368">Histidine biosynthesis</keyword>
<keyword id="KW-1185">Reference proteome</keyword>
<sequence length="397" mass="44254">MSKPFMFEKPFGMRDTLPEWYKTKKNICDQMTEEINLWGYDMIETPTLEYYETVGVVSAILDQQLFKLLDQQGNTLVLRPDMTAPIARLVASSLKDRAYPLRLAYQSNVYRAQQNEGGKPAEFEQLGVELIGDGTASADGEVIALMIAALKRAGLSEFKVAIGHVGYVNALLMDVVGNEQRADRLRRFLYEKNYVGYREHVKSLNLSTIDKSRLMNLLSLRGGRAAIEEARGLIQTEKGKTALAEMTKLYEVLESYGASEYVKFDLTLVLHMSYYTGVVFEGYGNRLGVPLCSGGRYDELLSKFHRPAQATGFGVRIDLLVEALNGEIISNGHEQTCILFSNERRFEAIELARKKRANGEAVVLQDLAGVTDVDAMSSNYQDVIYCIGTAGRGGEDA</sequence>
<reference key="1">
    <citation type="journal article" date="2000" name="Nucleic Acids Res.">
        <title>Complete genome sequence of the alkaliphilic bacterium Bacillus halodurans and genomic sequence comparison with Bacillus subtilis.</title>
        <authorList>
            <person name="Takami H."/>
            <person name="Nakasone K."/>
            <person name="Takaki Y."/>
            <person name="Maeno G."/>
            <person name="Sasaki R."/>
            <person name="Masui N."/>
            <person name="Fuji F."/>
            <person name="Hirama C."/>
            <person name="Nakamura Y."/>
            <person name="Ogasawara N."/>
            <person name="Kuhara S."/>
            <person name="Horikoshi K."/>
        </authorList>
    </citation>
    <scope>NUCLEOTIDE SEQUENCE [LARGE SCALE GENOMIC DNA]</scope>
    <source>
        <strain>ATCC BAA-125 / DSM 18197 / FERM 7344 / JCM 9153 / C-125</strain>
    </source>
</reference>
<feature type="chain" id="PRO_0000171025" description="ATP phosphoribosyltransferase regulatory subunit">
    <location>
        <begin position="1"/>
        <end position="397"/>
    </location>
</feature>
<feature type="helix" evidence="2">
    <location>
        <begin position="18"/>
        <end position="37"/>
    </location>
</feature>
<feature type="strand" evidence="2">
    <location>
        <begin position="47"/>
        <end position="50"/>
    </location>
</feature>
<feature type="turn" evidence="2">
    <location>
        <begin position="51"/>
        <end position="53"/>
    </location>
</feature>
<feature type="helix" evidence="2">
    <location>
        <begin position="54"/>
        <end position="57"/>
    </location>
</feature>
<feature type="strand" evidence="2">
    <location>
        <begin position="58"/>
        <end position="60"/>
    </location>
</feature>
<feature type="helix" evidence="2">
    <location>
        <begin position="62"/>
        <end position="64"/>
    </location>
</feature>
<feature type="strand" evidence="2">
    <location>
        <begin position="67"/>
        <end position="69"/>
    </location>
</feature>
<feature type="strand" evidence="2">
    <location>
        <begin position="75"/>
        <end position="78"/>
    </location>
</feature>
<feature type="helix" evidence="2">
    <location>
        <begin position="83"/>
        <end position="93"/>
    </location>
</feature>
<feature type="strand" evidence="2">
    <location>
        <begin position="95"/>
        <end position="97"/>
    </location>
</feature>
<feature type="strand" evidence="2">
    <location>
        <begin position="101"/>
        <end position="110"/>
    </location>
</feature>
<feature type="strand" evidence="2">
    <location>
        <begin position="121"/>
        <end position="132"/>
    </location>
</feature>
<feature type="helix" evidence="2">
    <location>
        <begin position="136"/>
        <end position="152"/>
    </location>
</feature>
<feature type="strand" evidence="2">
    <location>
        <begin position="157"/>
        <end position="164"/>
    </location>
</feature>
<feature type="helix" evidence="2">
    <location>
        <begin position="165"/>
        <end position="176"/>
    </location>
</feature>
<feature type="helix" evidence="2">
    <location>
        <begin position="179"/>
        <end position="190"/>
    </location>
</feature>
<feature type="helix" evidence="2">
    <location>
        <begin position="194"/>
        <end position="203"/>
    </location>
</feature>
<feature type="strand" evidence="2">
    <location>
        <begin position="204"/>
        <end position="206"/>
    </location>
</feature>
<feature type="helix" evidence="2">
    <location>
        <begin position="208"/>
        <end position="216"/>
    </location>
</feature>
<feature type="helix" evidence="2">
    <location>
        <begin position="217"/>
        <end position="219"/>
    </location>
</feature>
<feature type="strand" evidence="2">
    <location>
        <begin position="221"/>
        <end position="223"/>
    </location>
</feature>
<feature type="helix" evidence="2">
    <location>
        <begin position="224"/>
        <end position="231"/>
    </location>
</feature>
<feature type="helix" evidence="2">
    <location>
        <begin position="237"/>
        <end position="255"/>
    </location>
</feature>
<feature type="helix" evidence="2">
    <location>
        <begin position="259"/>
        <end position="261"/>
    </location>
</feature>
<feature type="strand" evidence="2">
    <location>
        <begin position="262"/>
        <end position="265"/>
    </location>
</feature>
<feature type="strand" evidence="2">
    <location>
        <begin position="272"/>
        <end position="274"/>
    </location>
</feature>
<feature type="strand" evidence="2">
    <location>
        <begin position="277"/>
        <end position="284"/>
    </location>
</feature>
<feature type="strand" evidence="2">
    <location>
        <begin position="288"/>
        <end position="296"/>
    </location>
</feature>
<feature type="helix" evidence="2">
    <location>
        <begin position="300"/>
        <end position="303"/>
    </location>
</feature>
<feature type="strand" evidence="2">
    <location>
        <begin position="310"/>
        <end position="316"/>
    </location>
</feature>
<feature type="helix" evidence="2">
    <location>
        <begin position="317"/>
        <end position="324"/>
    </location>
</feature>
<feature type="strand" evidence="2">
    <location>
        <begin position="336"/>
        <end position="340"/>
    </location>
</feature>
<feature type="helix" evidence="2">
    <location>
        <begin position="342"/>
        <end position="344"/>
    </location>
</feature>
<feature type="helix" evidence="2">
    <location>
        <begin position="345"/>
        <end position="356"/>
    </location>
</feature>
<feature type="turn" evidence="2">
    <location>
        <begin position="357"/>
        <end position="359"/>
    </location>
</feature>
<feature type="strand" evidence="2">
    <location>
        <begin position="362"/>
        <end position="366"/>
    </location>
</feature>
<feature type="helix" evidence="2">
    <location>
        <begin position="367"/>
        <end position="369"/>
    </location>
</feature>
<feature type="helix" evidence="2">
    <location>
        <begin position="373"/>
        <end position="377"/>
    </location>
</feature>
<feature type="strand" evidence="2">
    <location>
        <begin position="380"/>
        <end position="386"/>
    </location>
</feature>
<name>HISZ_HALH5</name>
<accession>Q9K6Z0</accession>
<evidence type="ECO:0000255" key="1">
    <source>
        <dbReference type="HAMAP-Rule" id="MF_00125"/>
    </source>
</evidence>
<evidence type="ECO:0007829" key="2">
    <source>
        <dbReference type="PDB" id="3OD1"/>
    </source>
</evidence>
<proteinExistence type="evidence at protein level"/>